<gene>
    <name evidence="1" type="primary">menH</name>
    <name type="ordered locus">SNSL254_A2493</name>
</gene>
<evidence type="ECO:0000255" key="1">
    <source>
        <dbReference type="HAMAP-Rule" id="MF_01660"/>
    </source>
</evidence>
<reference key="1">
    <citation type="journal article" date="2011" name="J. Bacteriol.">
        <title>Comparative genomics of 28 Salmonella enterica isolates: evidence for CRISPR-mediated adaptive sublineage evolution.</title>
        <authorList>
            <person name="Fricke W.F."/>
            <person name="Mammel M.K."/>
            <person name="McDermott P.F."/>
            <person name="Tartera C."/>
            <person name="White D.G."/>
            <person name="Leclerc J.E."/>
            <person name="Ravel J."/>
            <person name="Cebula T.A."/>
        </authorList>
    </citation>
    <scope>NUCLEOTIDE SEQUENCE [LARGE SCALE GENOMIC DNA]</scope>
    <source>
        <strain>SL254</strain>
    </source>
</reference>
<dbReference type="EC" id="4.2.99.20" evidence="1"/>
<dbReference type="EMBL" id="CP001113">
    <property type="protein sequence ID" value="ACF64493.1"/>
    <property type="molecule type" value="Genomic_DNA"/>
</dbReference>
<dbReference type="RefSeq" id="WP_000979149.1">
    <property type="nucleotide sequence ID" value="NZ_CCMR01000001.1"/>
</dbReference>
<dbReference type="SMR" id="B4SYY0"/>
<dbReference type="ESTHER" id="salty-YFBB">
    <property type="family name" value="MenH_SHCHC"/>
</dbReference>
<dbReference type="KEGG" id="see:SNSL254_A2493"/>
<dbReference type="HOGENOM" id="CLU_020336_38_2_6"/>
<dbReference type="UniPathway" id="UPA00079"/>
<dbReference type="UniPathway" id="UPA01057">
    <property type="reaction ID" value="UER00900"/>
</dbReference>
<dbReference type="Proteomes" id="UP000008824">
    <property type="component" value="Chromosome"/>
</dbReference>
<dbReference type="GO" id="GO:0070205">
    <property type="term" value="F:2-succinyl-6-hydroxy-2,4-cyclohexadiene-1-carboxylate synthase activity"/>
    <property type="evidence" value="ECO:0007669"/>
    <property type="project" value="UniProtKB-UniRule"/>
</dbReference>
<dbReference type="GO" id="GO:0009234">
    <property type="term" value="P:menaquinone biosynthetic process"/>
    <property type="evidence" value="ECO:0007669"/>
    <property type="project" value="UniProtKB-UniRule"/>
</dbReference>
<dbReference type="Gene3D" id="3.40.50.1820">
    <property type="entry name" value="alpha/beta hydrolase"/>
    <property type="match status" value="1"/>
</dbReference>
<dbReference type="HAMAP" id="MF_01660">
    <property type="entry name" value="MenH"/>
    <property type="match status" value="1"/>
</dbReference>
<dbReference type="InterPro" id="IPR000073">
    <property type="entry name" value="AB_hydrolase_1"/>
</dbReference>
<dbReference type="InterPro" id="IPR029058">
    <property type="entry name" value="AB_hydrolase_fold"/>
</dbReference>
<dbReference type="InterPro" id="IPR022485">
    <property type="entry name" value="SHCHC_synthase_MenH"/>
</dbReference>
<dbReference type="NCBIfam" id="TIGR03695">
    <property type="entry name" value="menH_SHCHC"/>
    <property type="match status" value="1"/>
</dbReference>
<dbReference type="NCBIfam" id="NF008340">
    <property type="entry name" value="PRK11126.1"/>
    <property type="match status" value="1"/>
</dbReference>
<dbReference type="PANTHER" id="PTHR42916">
    <property type="entry name" value="2-SUCCINYL-5-ENOLPYRUVYL-6-HYDROXY-3-CYCLOHEXENE-1-CARBOXYLATE SYNTHASE"/>
    <property type="match status" value="1"/>
</dbReference>
<dbReference type="PANTHER" id="PTHR42916:SF1">
    <property type="entry name" value="PROTEIN PHYLLO, CHLOROPLASTIC"/>
    <property type="match status" value="1"/>
</dbReference>
<dbReference type="Pfam" id="PF12697">
    <property type="entry name" value="Abhydrolase_6"/>
    <property type="match status" value="1"/>
</dbReference>
<dbReference type="SUPFAM" id="SSF53474">
    <property type="entry name" value="alpha/beta-Hydrolases"/>
    <property type="match status" value="1"/>
</dbReference>
<organism>
    <name type="scientific">Salmonella newport (strain SL254)</name>
    <dbReference type="NCBI Taxonomy" id="423368"/>
    <lineage>
        <taxon>Bacteria</taxon>
        <taxon>Pseudomonadati</taxon>
        <taxon>Pseudomonadota</taxon>
        <taxon>Gammaproteobacteria</taxon>
        <taxon>Enterobacterales</taxon>
        <taxon>Enterobacteriaceae</taxon>
        <taxon>Salmonella</taxon>
    </lineage>
</organism>
<proteinExistence type="inferred from homology"/>
<keyword id="KW-0456">Lyase</keyword>
<keyword id="KW-0474">Menaquinone biosynthesis</keyword>
<accession>B4SYY0</accession>
<feature type="chain" id="PRO_1000187119" description="2-succinyl-6-hydroxy-2,4-cyclohexadiene-1-carboxylate synthase">
    <location>
        <begin position="1"/>
        <end position="252"/>
    </location>
</feature>
<protein>
    <recommendedName>
        <fullName evidence="1">2-succinyl-6-hydroxy-2,4-cyclohexadiene-1-carboxylate synthase</fullName>
        <shortName evidence="1">SHCHC synthase</shortName>
        <ecNumber evidence="1">4.2.99.20</ecNumber>
    </recommendedName>
</protein>
<sequence>MMLHAQHMPGQPGTPSLVFLHGFSGDCREWQPVGEQFHGCSRLYIDLPGHGGSAAIPVGGFADVIRLLRATLISYNILKFWLVGYSLGGRVAMMAACQGIPGLCGLVVEGGHPGLQNEQARAERRLSDGRWAERFRHEPLTEVFHDWYQQPVFASLTAQQRQALTALRSQNNGETLAAMLEATSLAAQPDLREALNALAFPFYYLCGERDSKFRALAQEVAATCHVIRNAGHNAHRENPAGVVDSLAQILRL</sequence>
<comment type="function">
    <text evidence="1">Catalyzes a proton abstraction reaction that results in 2,5-elimination of pyruvate from 2-succinyl-5-enolpyruvyl-6-hydroxy-3-cyclohexene-1-carboxylate (SEPHCHC) and the formation of 2-succinyl-6-hydroxy-2,4-cyclohexadiene-1-carboxylate (SHCHC).</text>
</comment>
<comment type="catalytic activity">
    <reaction evidence="1">
        <text>5-enolpyruvoyl-6-hydroxy-2-succinyl-cyclohex-3-ene-1-carboxylate = (1R,6R)-6-hydroxy-2-succinyl-cyclohexa-2,4-diene-1-carboxylate + pyruvate</text>
        <dbReference type="Rhea" id="RHEA:25597"/>
        <dbReference type="ChEBI" id="CHEBI:15361"/>
        <dbReference type="ChEBI" id="CHEBI:58689"/>
        <dbReference type="ChEBI" id="CHEBI:58818"/>
        <dbReference type="EC" id="4.2.99.20"/>
    </reaction>
</comment>
<comment type="pathway">
    <text evidence="1">Quinol/quinone metabolism; 1,4-dihydroxy-2-naphthoate biosynthesis; 1,4-dihydroxy-2-naphthoate from chorismate: step 3/7.</text>
</comment>
<comment type="pathway">
    <text evidence="1">Quinol/quinone metabolism; menaquinone biosynthesis.</text>
</comment>
<comment type="subunit">
    <text evidence="1">Monomer.</text>
</comment>
<comment type="similarity">
    <text evidence="1">Belongs to the AB hydrolase superfamily. MenH family.</text>
</comment>
<name>MENH_SALNS</name>